<accession>P42865</accession>
<organism>
    <name type="scientific">Leishmania amazonensis</name>
    <dbReference type="NCBI Taxonomy" id="5659"/>
    <lineage>
        <taxon>Eukaryota</taxon>
        <taxon>Discoba</taxon>
        <taxon>Euglenozoa</taxon>
        <taxon>Kinetoplastea</taxon>
        <taxon>Metakinetoplastina</taxon>
        <taxon>Trypanosomatida</taxon>
        <taxon>Trypanosomatidae</taxon>
        <taxon>Leishmaniinae</taxon>
        <taxon>Leishmania</taxon>
    </lineage>
</organism>
<protein>
    <recommendedName>
        <fullName>Probable quinone oxidoreductase</fullName>
        <ecNumber>1.6.5.5</ecNumber>
    </recommendedName>
    <alternativeName>
        <fullName>NADPH:quinone reductase</fullName>
    </alternativeName>
    <alternativeName>
        <fullName>P36</fullName>
    </alternativeName>
</protein>
<evidence type="ECO:0000305" key="1"/>
<comment type="catalytic activity">
    <reaction>
        <text>2 a quinone + NADPH + H(+) = 2 a 1,4-benzosemiquinone + NADP(+)</text>
        <dbReference type="Rhea" id="RHEA:14269"/>
        <dbReference type="ChEBI" id="CHEBI:15378"/>
        <dbReference type="ChEBI" id="CHEBI:57783"/>
        <dbReference type="ChEBI" id="CHEBI:58349"/>
        <dbReference type="ChEBI" id="CHEBI:132124"/>
        <dbReference type="ChEBI" id="CHEBI:134225"/>
        <dbReference type="EC" id="1.6.5.5"/>
    </reaction>
</comment>
<comment type="similarity">
    <text evidence="1">Belongs to the zinc-containing alcohol dehydrogenase family. Quinone oxidoreductase subfamily.</text>
</comment>
<keyword id="KW-0521">NADP</keyword>
<keyword id="KW-0560">Oxidoreductase</keyword>
<feature type="chain" id="PRO_0000160911" description="Probable quinone oxidoreductase">
    <location>
        <begin position="1"/>
        <end position="340"/>
    </location>
</feature>
<reference key="1">
    <citation type="journal article" date="1994" name="Mol. Biochem. Parasitol.">
        <title>Identification by extrachromosomal amplification and overexpression of a zeta-crystallin/NADPH-oxidoreductase homologue constitutively expressed in Leishmania spp.</title>
        <authorList>
            <person name="Liu X."/>
            <person name="Chang K.P."/>
        </authorList>
    </citation>
    <scope>NUCLEOTIDE SEQUENCE [GENOMIC DNA]</scope>
</reference>
<proteinExistence type="inferred from homology"/>
<dbReference type="EC" id="1.6.5.5"/>
<dbReference type="EMBL" id="L11705">
    <property type="protein sequence ID" value="AAA73554.1"/>
    <property type="molecule type" value="Genomic_DNA"/>
</dbReference>
<dbReference type="SMR" id="P42865"/>
<dbReference type="VEuPathDB" id="TriTrypDB:LAMA_000348900"/>
<dbReference type="VEuPathDB" id="TriTrypDB:LAMAPH8_000358900"/>
<dbReference type="GO" id="GO:0005739">
    <property type="term" value="C:mitochondrion"/>
    <property type="evidence" value="ECO:0007669"/>
    <property type="project" value="TreeGrafter"/>
</dbReference>
<dbReference type="GO" id="GO:0003960">
    <property type="term" value="F:NADPH:quinone reductase activity"/>
    <property type="evidence" value="ECO:0007669"/>
    <property type="project" value="UniProtKB-EC"/>
</dbReference>
<dbReference type="GO" id="GO:0008270">
    <property type="term" value="F:zinc ion binding"/>
    <property type="evidence" value="ECO:0007669"/>
    <property type="project" value="InterPro"/>
</dbReference>
<dbReference type="CDD" id="cd08250">
    <property type="entry name" value="Mgc45594_like"/>
    <property type="match status" value="1"/>
</dbReference>
<dbReference type="FunFam" id="3.40.50.720:FF:000121">
    <property type="entry name" value="Prostaglandin reductase 2"/>
    <property type="match status" value="1"/>
</dbReference>
<dbReference type="Gene3D" id="3.90.180.10">
    <property type="entry name" value="Medium-chain alcohol dehydrogenases, catalytic domain"/>
    <property type="match status" value="1"/>
</dbReference>
<dbReference type="Gene3D" id="3.40.50.720">
    <property type="entry name" value="NAD(P)-binding Rossmann-like Domain"/>
    <property type="match status" value="1"/>
</dbReference>
<dbReference type="InterPro" id="IPR013149">
    <property type="entry name" value="ADH-like_C"/>
</dbReference>
<dbReference type="InterPro" id="IPR013154">
    <property type="entry name" value="ADH-like_N"/>
</dbReference>
<dbReference type="InterPro" id="IPR011032">
    <property type="entry name" value="GroES-like_sf"/>
</dbReference>
<dbReference type="InterPro" id="IPR036291">
    <property type="entry name" value="NAD(P)-bd_dom_sf"/>
</dbReference>
<dbReference type="InterPro" id="IPR020843">
    <property type="entry name" value="PKS_ER"/>
</dbReference>
<dbReference type="InterPro" id="IPR002364">
    <property type="entry name" value="Quin_OxRdtase/zeta-crystal_CS"/>
</dbReference>
<dbReference type="InterPro" id="IPR051397">
    <property type="entry name" value="Zn-ADH-like_protein"/>
</dbReference>
<dbReference type="PANTHER" id="PTHR43677:SF3">
    <property type="entry name" value="PROSTAGLANDIN REDUCTASE 3"/>
    <property type="match status" value="1"/>
</dbReference>
<dbReference type="PANTHER" id="PTHR43677">
    <property type="entry name" value="SHORT-CHAIN DEHYDROGENASE/REDUCTASE"/>
    <property type="match status" value="1"/>
</dbReference>
<dbReference type="Pfam" id="PF08240">
    <property type="entry name" value="ADH_N"/>
    <property type="match status" value="1"/>
</dbReference>
<dbReference type="Pfam" id="PF00107">
    <property type="entry name" value="ADH_zinc_N"/>
    <property type="match status" value="1"/>
</dbReference>
<dbReference type="SMART" id="SM00829">
    <property type="entry name" value="PKS_ER"/>
    <property type="match status" value="1"/>
</dbReference>
<dbReference type="SUPFAM" id="SSF50129">
    <property type="entry name" value="GroES-like"/>
    <property type="match status" value="1"/>
</dbReference>
<dbReference type="SUPFAM" id="SSF51735">
    <property type="entry name" value="NAD(P)-binding Rossmann-fold domains"/>
    <property type="match status" value="1"/>
</dbReference>
<dbReference type="PROSITE" id="PS01162">
    <property type="entry name" value="QOR_ZETA_CRYSTAL"/>
    <property type="match status" value="1"/>
</dbReference>
<name>QOR_LEIAM</name>
<sequence>MSSPSNFKKLQVVSLSKDFRSSTSVVEAHLPEEVPEGMVRVSVKYAGVNASDLNFTNGSYFKNVQPPFDCGFEAAGTVVQIGAGVANVKVGDHVVLMQYGCFAEFLDAPAERCIPVPELKPEYSVLPVSALTAAVALGEVGRVKKGDVALVTAAAGGTGQIAVQLLKHVYGCTVIGTCSSEEKAEFLKSIGCDHVINYKTESLDGRLHELCPKGVDVVYECVGGHTFNDAVRHVAVHARVVIIGSISSYKSGEVVPFSDPSGTSVTMLLLVKSASLNGFFLPQFHDVIPKYMANLLQYLKAGQVKLFVDKKVFHGLSSVADAVDHLYSGANYGKVLVEIQ</sequence>